<gene>
    <name evidence="6" type="primary">kel</name>
</gene>
<dbReference type="EMBL" id="AJ577207">
    <property type="protein sequence ID" value="CAE12055.1"/>
    <property type="molecule type" value="mRNA"/>
</dbReference>
<dbReference type="EMBL" id="AJ577207">
    <property type="protein sequence ID" value="CAE12056.1"/>
    <property type="molecule type" value="mRNA"/>
</dbReference>
<dbReference type="STRING" id="30069.Q70JS2"/>
<dbReference type="VEuPathDB" id="VectorBase:ASTE008691"/>
<dbReference type="VEuPathDB" id="VectorBase:ASTEI03909"/>
<dbReference type="VEuPathDB" id="VectorBase:ASTEI06646"/>
<dbReference type="VEuPathDB" id="VectorBase:ASTEI20_043444"/>
<dbReference type="Proteomes" id="UP000076408">
    <property type="component" value="Unassembled WGS sequence"/>
</dbReference>
<dbReference type="GO" id="GO:0005737">
    <property type="term" value="C:cytoplasm"/>
    <property type="evidence" value="ECO:0007669"/>
    <property type="project" value="UniProtKB-KW"/>
</dbReference>
<dbReference type="GO" id="GO:0005856">
    <property type="term" value="C:cytoskeleton"/>
    <property type="evidence" value="ECO:0007669"/>
    <property type="project" value="UniProtKB-SubCell"/>
</dbReference>
<dbReference type="GO" id="GO:0003779">
    <property type="term" value="F:actin binding"/>
    <property type="evidence" value="ECO:0007669"/>
    <property type="project" value="UniProtKB-KW"/>
</dbReference>
<dbReference type="CDD" id="cd18445">
    <property type="entry name" value="BACK_KLHL2_like"/>
    <property type="match status" value="1"/>
</dbReference>
<dbReference type="CDD" id="cd18235">
    <property type="entry name" value="BTB_POZ_KLHL2-like"/>
    <property type="match status" value="1"/>
</dbReference>
<dbReference type="FunFam" id="1.25.40.420:FF:000001">
    <property type="entry name" value="Kelch-like family member 12"/>
    <property type="match status" value="1"/>
</dbReference>
<dbReference type="FunFam" id="2.120.10.80:FF:000002">
    <property type="entry name" value="Kelch-like family member 2"/>
    <property type="match status" value="1"/>
</dbReference>
<dbReference type="FunFam" id="3.30.710.10:FF:000001">
    <property type="entry name" value="Kelch-like family member 20"/>
    <property type="match status" value="1"/>
</dbReference>
<dbReference type="Gene3D" id="1.25.40.420">
    <property type="match status" value="1"/>
</dbReference>
<dbReference type="Gene3D" id="2.120.10.80">
    <property type="entry name" value="Kelch-type beta propeller"/>
    <property type="match status" value="1"/>
</dbReference>
<dbReference type="Gene3D" id="3.30.710.10">
    <property type="entry name" value="Potassium Channel Kv1.1, Chain A"/>
    <property type="match status" value="1"/>
</dbReference>
<dbReference type="InterPro" id="IPR011705">
    <property type="entry name" value="BACK"/>
</dbReference>
<dbReference type="InterPro" id="IPR000210">
    <property type="entry name" value="BTB/POZ_dom"/>
</dbReference>
<dbReference type="InterPro" id="IPR015915">
    <property type="entry name" value="Kelch-typ_b-propeller"/>
</dbReference>
<dbReference type="InterPro" id="IPR006652">
    <property type="entry name" value="Kelch_1"/>
</dbReference>
<dbReference type="InterPro" id="IPR011333">
    <property type="entry name" value="SKP1/BTB/POZ_sf"/>
</dbReference>
<dbReference type="PANTHER" id="PTHR24412">
    <property type="entry name" value="KELCH PROTEIN"/>
    <property type="match status" value="1"/>
</dbReference>
<dbReference type="PANTHER" id="PTHR24412:SF466">
    <property type="entry name" value="RING CANAL KELCH PROTEIN"/>
    <property type="match status" value="1"/>
</dbReference>
<dbReference type="Pfam" id="PF07707">
    <property type="entry name" value="BACK"/>
    <property type="match status" value="1"/>
</dbReference>
<dbReference type="Pfam" id="PF00651">
    <property type="entry name" value="BTB"/>
    <property type="match status" value="1"/>
</dbReference>
<dbReference type="Pfam" id="PF01344">
    <property type="entry name" value="Kelch_1"/>
    <property type="match status" value="6"/>
</dbReference>
<dbReference type="SMART" id="SM00875">
    <property type="entry name" value="BACK"/>
    <property type="match status" value="1"/>
</dbReference>
<dbReference type="SMART" id="SM00225">
    <property type="entry name" value="BTB"/>
    <property type="match status" value="1"/>
</dbReference>
<dbReference type="SMART" id="SM00612">
    <property type="entry name" value="Kelch"/>
    <property type="match status" value="6"/>
</dbReference>
<dbReference type="SUPFAM" id="SSF117281">
    <property type="entry name" value="Kelch motif"/>
    <property type="match status" value="1"/>
</dbReference>
<dbReference type="SUPFAM" id="SSF54695">
    <property type="entry name" value="POZ domain"/>
    <property type="match status" value="1"/>
</dbReference>
<dbReference type="PROSITE" id="PS50097">
    <property type="entry name" value="BTB"/>
    <property type="match status" value="1"/>
</dbReference>
<organism>
    <name type="scientific">Anopheles stephensi</name>
    <name type="common">Indo-Pakistan malaria mosquito</name>
    <dbReference type="NCBI Taxonomy" id="30069"/>
    <lineage>
        <taxon>Eukaryota</taxon>
        <taxon>Metazoa</taxon>
        <taxon>Ecdysozoa</taxon>
        <taxon>Arthropoda</taxon>
        <taxon>Hexapoda</taxon>
        <taxon>Insecta</taxon>
        <taxon>Pterygota</taxon>
        <taxon>Neoptera</taxon>
        <taxon>Endopterygota</taxon>
        <taxon>Diptera</taxon>
        <taxon>Nematocera</taxon>
        <taxon>Culicoidea</taxon>
        <taxon>Culicidae</taxon>
        <taxon>Anophelinae</taxon>
        <taxon>Anopheles</taxon>
    </lineage>
</organism>
<keyword id="KW-0009">Actin-binding</keyword>
<keyword id="KW-0963">Cytoplasm</keyword>
<keyword id="KW-0206">Cytoskeleton</keyword>
<keyword id="KW-0880">Kelch repeat</keyword>
<keyword id="KW-1185">Reference proteome</keyword>
<keyword id="KW-0677">Repeat</keyword>
<keyword id="KW-0712">Selenocysteine</keyword>
<accession>Q70JS2</accession>
<accession>Q70JS3</accession>
<reference evidence="6" key="1">
    <citation type="submission" date="2003-07" db="EMBL/GenBank/DDBJ databases">
        <title>Identification and molecular characterization of a kelch-like protein in Anopheles stephensi.</title>
        <authorList>
            <person name="Venanzi S."/>
            <person name="Battaglia P.A."/>
        </authorList>
    </citation>
    <scope>NUCLEOTIDE SEQUENCE [MRNA]</scope>
</reference>
<evidence type="ECO:0000250" key="1"/>
<evidence type="ECO:0000255" key="2"/>
<evidence type="ECO:0000255" key="3">
    <source>
        <dbReference type="PROSITE-ProRule" id="PRU00037"/>
    </source>
</evidence>
<evidence type="ECO:0000256" key="4">
    <source>
        <dbReference type="SAM" id="MobiDB-lite"/>
    </source>
</evidence>
<evidence type="ECO:0000269" key="5">
    <source ref="1"/>
</evidence>
<evidence type="ECO:0000312" key="6">
    <source>
        <dbReference type="EMBL" id="CAE12056.1"/>
    </source>
</evidence>
<proteinExistence type="evidence at transcript level"/>
<protein>
    <recommendedName>
        <fullName>Ring canal kelch homolog</fullName>
    </recommendedName>
    <alternativeName>
        <fullName>Kelch-like protein 1</fullName>
    </alternativeName>
    <component>
        <recommendedName>
            <fullName>Kelch short protein</fullName>
        </recommendedName>
    </component>
</protein>
<sequence length="1499" mass="160267">MLSFIQYTLGIMSSLGNGNNQHNINSNTGSSQNSAAEGTMERGSCILVRYASQNSLDESSQKQLPRSNGKEKTTGAYRNNIHTQRSFEAMNMMREQNLLCDVVLVAEGIEIPAHKMVLASCSPYFYAMFTGFEESRQDRITLQGVDPRALQLLIEYVYRAVVEVTEDNVQILLTAANLLQLTDVRDACCDYLQTQLDPSNCLGIRDFADIHGCIDLLNYAETYIEQHFSEVVQFDEFLNLTSDQVAHLIKSDRLSVPTEEKVYECVITWIQYDVNGRQHHLAELMEHVRLPLLSQDYLVQYVEKEQLMKGDLQCKDYIIEALKYHLLKGEQKTCFKTPRTIPRQPVGLPKVLLVIGGQAPKAIRSVECYDLREEKWYQVAEMPTRRCRAGLAVLGDKVYAVGGFNGSLRVKTVDVYDPVLDQWTTSHNMEARRSTLGVAVLNNCIYAVGGFDGSTGLSSAEMFDPKRQEWRLIASMSTRRSSVGVGVVNGLLYAVGGYDGASRQCLASVERYNPSTDTWTQIAEMSARRSGAGVGVLDNILYAVGGHDGPLVRKSVEAYDPATNTWRAVGDMAFCRRNAGVVAHNGMLYVVGGDDGLSNLASVEVYSPESDSWRILPSSMSIGRSYAGVAMIDKPLUSEQQGARVATKQSYASHHPTGTIYSRYANCAALQQAQNEAAAGQAAGFGNDDENSQAEGLNPEPANSNNSAPNGNNVHYENIYESIEQFAPLNGGNGGNGGAHAGIPAGSNPLQYAVLNQPQPGPSGLGPGQAHRSLGGERGAVGGGGGGGGAVGGGCIPPPPPSMLHSMQQLYHPMAYRNELYDRTAGYDVPRGRPAPSYYQNQPPTGPSANGRCPNLHLDLNRVRYPSGASAQQQQRTPRQRSFDDTESYHYYRCQNQSNGTAKYDNLYERVREEPAYQNTGSFAPAANRAAGLFGRFDVIGHGVGRIERHLSSSCGNIDHYSLGGHYAVLGHSHLGTMGHIRLNQSNSSSASSASPYGANGPATTSQPNPTKDSSSVNVKSFLSCLGGENSQSMNNLNKSSAAHGTASGSAPAANGNEATLPGSISGGASGGGAGGAGSSGGNGGQGSSIMGGLASAAAVGVNGTGASTSTTLGGKSTGAIPKISRKSKQSQQQGPSDPTAGTSAPQSLAGGNGLPPVDVSLGAPADPMYANGCGGRVTKPSLQWLLVNKWLPLWVGQTPPDYKFIDFNFMFSRNCDGCSSAGGSHGQQQQQPQELVRYGTIDQADYIPPAREYPTMTGSYPRVLRNTPQLARLREHEYENVPLNDPPPGRGLRGIASPLQVGRARSESPSRPPGSDPLRTWAFDFENNTFRPARSPALATSSGLAINREKPREVRRITDGTFGARDLAQPDTEKPGPSGLASKLALLKQPEPDKEDGRLSSASSSSDSDNFAIESLAAESSGGQPDEEEEEEGGSTRSGVGRRDDGGRVVGNSTEKENVGSSSNETSDSLNYDGPASADRSLSEDEVEAARPDNTASE</sequence>
<comment type="function">
    <text evidence="1">May play a role in organizing the actin cytoskeleton.</text>
</comment>
<comment type="subcellular location">
    <subcellularLocation>
        <location evidence="1">Cytoplasm</location>
        <location evidence="1">Cytoskeleton</location>
    </subcellularLocation>
</comment>
<name>KELC_ANOST</name>
<feature type="chain" id="PRO_0000016649" description="Ring canal kelch homolog">
    <location>
        <begin position="1"/>
        <end position="1499"/>
    </location>
</feature>
<feature type="chain" id="PRO_0000016650" description="Kelch short protein">
    <location>
        <begin position="1"/>
        <end position="636"/>
    </location>
</feature>
<feature type="domain" description="BTB" evidence="3">
    <location>
        <begin position="100"/>
        <end position="166"/>
    </location>
</feature>
<feature type="repeat" description="Kelch 1" evidence="2">
    <location>
        <begin position="351"/>
        <end position="396"/>
    </location>
</feature>
<feature type="repeat" description="Kelch 2" evidence="2">
    <location>
        <begin position="397"/>
        <end position="443"/>
    </location>
</feature>
<feature type="repeat" description="Kelch 3" evidence="2">
    <location>
        <begin position="444"/>
        <end position="490"/>
    </location>
</feature>
<feature type="repeat" description="Kelch 4" evidence="2">
    <location>
        <begin position="492"/>
        <end position="539"/>
    </location>
</feature>
<feature type="repeat" description="Kelch 5" evidence="2">
    <location>
        <begin position="541"/>
        <end position="586"/>
    </location>
</feature>
<feature type="repeat" description="Kelch 6" evidence="2">
    <location>
        <begin position="588"/>
        <end position="634"/>
    </location>
</feature>
<feature type="region of interest" description="Disordered" evidence="4">
    <location>
        <begin position="56"/>
        <end position="75"/>
    </location>
</feature>
<feature type="region of interest" description="Disordered" evidence="4">
    <location>
        <begin position="679"/>
        <end position="714"/>
    </location>
</feature>
<feature type="region of interest" description="Disordered" evidence="4">
    <location>
        <begin position="750"/>
        <end position="786"/>
    </location>
</feature>
<feature type="region of interest" description="Disordered" evidence="4">
    <location>
        <begin position="825"/>
        <end position="856"/>
    </location>
</feature>
<feature type="region of interest" description="Disordered" evidence="4">
    <location>
        <begin position="984"/>
        <end position="1017"/>
    </location>
</feature>
<feature type="region of interest" description="Disordered" evidence="4">
    <location>
        <begin position="1033"/>
        <end position="1085"/>
    </location>
</feature>
<feature type="region of interest" description="Disordered" evidence="4">
    <location>
        <begin position="1107"/>
        <end position="1160"/>
    </location>
</feature>
<feature type="region of interest" description="Disordered" evidence="4">
    <location>
        <begin position="1301"/>
        <end position="1321"/>
    </location>
</feature>
<feature type="region of interest" description="Disordered" evidence="4">
    <location>
        <begin position="1334"/>
        <end position="1499"/>
    </location>
</feature>
<feature type="compositionally biased region" description="Polar residues" evidence="4">
    <location>
        <begin position="56"/>
        <end position="66"/>
    </location>
</feature>
<feature type="compositionally biased region" description="Low complexity" evidence="4">
    <location>
        <begin position="698"/>
        <end position="713"/>
    </location>
</feature>
<feature type="compositionally biased region" description="Gly residues" evidence="4">
    <location>
        <begin position="776"/>
        <end position="786"/>
    </location>
</feature>
<feature type="compositionally biased region" description="Low complexity" evidence="4">
    <location>
        <begin position="986"/>
        <end position="1003"/>
    </location>
</feature>
<feature type="compositionally biased region" description="Polar residues" evidence="4">
    <location>
        <begin position="1004"/>
        <end position="1017"/>
    </location>
</feature>
<feature type="compositionally biased region" description="Low complexity" evidence="4">
    <location>
        <begin position="1040"/>
        <end position="1054"/>
    </location>
</feature>
<feature type="compositionally biased region" description="Gly residues" evidence="4">
    <location>
        <begin position="1065"/>
        <end position="1085"/>
    </location>
</feature>
<feature type="compositionally biased region" description="Low complexity" evidence="4">
    <location>
        <begin position="1107"/>
        <end position="1119"/>
    </location>
</feature>
<feature type="compositionally biased region" description="Polar residues" evidence="4">
    <location>
        <begin position="1135"/>
        <end position="1147"/>
    </location>
</feature>
<feature type="compositionally biased region" description="Basic and acidic residues" evidence="4">
    <location>
        <begin position="1348"/>
        <end position="1359"/>
    </location>
</feature>
<feature type="compositionally biased region" description="Low complexity" evidence="4">
    <location>
        <begin position="1401"/>
        <end position="1410"/>
    </location>
</feature>
<feature type="compositionally biased region" description="Polar residues" evidence="4">
    <location>
        <begin position="1460"/>
        <end position="1471"/>
    </location>
</feature>
<feature type="non-standard amino acid" description="Selenocysteine" evidence="5">
    <location>
        <position position="637"/>
    </location>
</feature>